<accession>B9JVW2</accession>
<dbReference type="EC" id="6.3.5.3" evidence="1"/>
<dbReference type="EMBL" id="CP000633">
    <property type="protein sequence ID" value="ACM36392.1"/>
    <property type="molecule type" value="Genomic_DNA"/>
</dbReference>
<dbReference type="RefSeq" id="WP_015915813.1">
    <property type="nucleotide sequence ID" value="NC_011989.1"/>
</dbReference>
<dbReference type="SMR" id="B9JVW2"/>
<dbReference type="STRING" id="311402.Avi_1941"/>
<dbReference type="KEGG" id="avi:Avi_1941"/>
<dbReference type="eggNOG" id="COG0046">
    <property type="taxonomic scope" value="Bacteria"/>
</dbReference>
<dbReference type="HOGENOM" id="CLU_003100_0_1_5"/>
<dbReference type="UniPathway" id="UPA00074">
    <property type="reaction ID" value="UER00128"/>
</dbReference>
<dbReference type="Proteomes" id="UP000001596">
    <property type="component" value="Chromosome 1"/>
</dbReference>
<dbReference type="GO" id="GO:0005737">
    <property type="term" value="C:cytoplasm"/>
    <property type="evidence" value="ECO:0007669"/>
    <property type="project" value="UniProtKB-SubCell"/>
</dbReference>
<dbReference type="GO" id="GO:0005524">
    <property type="term" value="F:ATP binding"/>
    <property type="evidence" value="ECO:0007669"/>
    <property type="project" value="UniProtKB-UniRule"/>
</dbReference>
<dbReference type="GO" id="GO:0000287">
    <property type="term" value="F:magnesium ion binding"/>
    <property type="evidence" value="ECO:0007669"/>
    <property type="project" value="UniProtKB-UniRule"/>
</dbReference>
<dbReference type="GO" id="GO:0004642">
    <property type="term" value="F:phosphoribosylformylglycinamidine synthase activity"/>
    <property type="evidence" value="ECO:0007669"/>
    <property type="project" value="UniProtKB-UniRule"/>
</dbReference>
<dbReference type="GO" id="GO:0006189">
    <property type="term" value="P:'de novo' IMP biosynthetic process"/>
    <property type="evidence" value="ECO:0007669"/>
    <property type="project" value="UniProtKB-UniRule"/>
</dbReference>
<dbReference type="CDD" id="cd02203">
    <property type="entry name" value="PurL_repeat1"/>
    <property type="match status" value="1"/>
</dbReference>
<dbReference type="CDD" id="cd02204">
    <property type="entry name" value="PurL_repeat2"/>
    <property type="match status" value="1"/>
</dbReference>
<dbReference type="FunFam" id="3.30.1330.10:FF:000004">
    <property type="entry name" value="Phosphoribosylformylglycinamidine synthase subunit PurL"/>
    <property type="match status" value="1"/>
</dbReference>
<dbReference type="Gene3D" id="3.90.650.10">
    <property type="entry name" value="PurM-like C-terminal domain"/>
    <property type="match status" value="2"/>
</dbReference>
<dbReference type="Gene3D" id="3.30.1330.10">
    <property type="entry name" value="PurM-like, N-terminal domain"/>
    <property type="match status" value="2"/>
</dbReference>
<dbReference type="HAMAP" id="MF_00420">
    <property type="entry name" value="PurL_2"/>
    <property type="match status" value="1"/>
</dbReference>
<dbReference type="InterPro" id="IPR010074">
    <property type="entry name" value="PRibForGlyAmidine_synth_PurL"/>
</dbReference>
<dbReference type="InterPro" id="IPR041609">
    <property type="entry name" value="PurL_linker"/>
</dbReference>
<dbReference type="InterPro" id="IPR010918">
    <property type="entry name" value="PurM-like_C_dom"/>
</dbReference>
<dbReference type="InterPro" id="IPR036676">
    <property type="entry name" value="PurM-like_C_sf"/>
</dbReference>
<dbReference type="InterPro" id="IPR016188">
    <property type="entry name" value="PurM-like_N"/>
</dbReference>
<dbReference type="InterPro" id="IPR036921">
    <property type="entry name" value="PurM-like_N_sf"/>
</dbReference>
<dbReference type="NCBIfam" id="TIGR01736">
    <property type="entry name" value="FGAM_synth_II"/>
    <property type="match status" value="1"/>
</dbReference>
<dbReference type="NCBIfam" id="NF002290">
    <property type="entry name" value="PRK01213.1"/>
    <property type="match status" value="1"/>
</dbReference>
<dbReference type="PANTHER" id="PTHR43555">
    <property type="entry name" value="PHOSPHORIBOSYLFORMYLGLYCINAMIDINE SYNTHASE SUBUNIT PURL"/>
    <property type="match status" value="1"/>
</dbReference>
<dbReference type="PANTHER" id="PTHR43555:SF1">
    <property type="entry name" value="PHOSPHORIBOSYLFORMYLGLYCINAMIDINE SYNTHASE SUBUNIT PURL"/>
    <property type="match status" value="1"/>
</dbReference>
<dbReference type="Pfam" id="PF00586">
    <property type="entry name" value="AIRS"/>
    <property type="match status" value="2"/>
</dbReference>
<dbReference type="Pfam" id="PF02769">
    <property type="entry name" value="AIRS_C"/>
    <property type="match status" value="2"/>
</dbReference>
<dbReference type="Pfam" id="PF18072">
    <property type="entry name" value="FGAR-AT_linker"/>
    <property type="match status" value="1"/>
</dbReference>
<dbReference type="PIRSF" id="PIRSF001587">
    <property type="entry name" value="FGAM_synthase_II"/>
    <property type="match status" value="1"/>
</dbReference>
<dbReference type="SUPFAM" id="SSF56042">
    <property type="entry name" value="PurM C-terminal domain-like"/>
    <property type="match status" value="2"/>
</dbReference>
<dbReference type="SUPFAM" id="SSF55326">
    <property type="entry name" value="PurM N-terminal domain-like"/>
    <property type="match status" value="2"/>
</dbReference>
<feature type="chain" id="PRO_1000134890" description="Phosphoribosylformylglycinamidine synthase subunit PurL">
    <location>
        <begin position="1"/>
        <end position="745"/>
    </location>
</feature>
<feature type="active site" evidence="1">
    <location>
        <position position="50"/>
    </location>
</feature>
<feature type="active site" description="Proton acceptor" evidence="1">
    <location>
        <position position="96"/>
    </location>
</feature>
<feature type="binding site" evidence="1">
    <location>
        <position position="53"/>
    </location>
    <ligand>
        <name>ATP</name>
        <dbReference type="ChEBI" id="CHEBI:30616"/>
    </ligand>
</feature>
<feature type="binding site" evidence="1">
    <location>
        <position position="92"/>
    </location>
    <ligand>
        <name>ATP</name>
        <dbReference type="ChEBI" id="CHEBI:30616"/>
    </ligand>
</feature>
<feature type="binding site" evidence="1">
    <location>
        <position position="94"/>
    </location>
    <ligand>
        <name>Mg(2+)</name>
        <dbReference type="ChEBI" id="CHEBI:18420"/>
        <label>1</label>
    </ligand>
</feature>
<feature type="binding site" evidence="1">
    <location>
        <begin position="95"/>
        <end position="98"/>
    </location>
    <ligand>
        <name>substrate</name>
    </ligand>
</feature>
<feature type="binding site" evidence="1">
    <location>
        <position position="117"/>
    </location>
    <ligand>
        <name>substrate</name>
    </ligand>
</feature>
<feature type="binding site" evidence="1">
    <location>
        <position position="118"/>
    </location>
    <ligand>
        <name>Mg(2+)</name>
        <dbReference type="ChEBI" id="CHEBI:18420"/>
        <label>2</label>
    </ligand>
</feature>
<feature type="binding site" evidence="1">
    <location>
        <position position="241"/>
    </location>
    <ligand>
        <name>substrate</name>
    </ligand>
</feature>
<feature type="binding site" evidence="1">
    <location>
        <position position="269"/>
    </location>
    <ligand>
        <name>Mg(2+)</name>
        <dbReference type="ChEBI" id="CHEBI:18420"/>
        <label>2</label>
    </ligand>
</feature>
<feature type="binding site" evidence="1">
    <location>
        <begin position="313"/>
        <end position="315"/>
    </location>
    <ligand>
        <name>substrate</name>
    </ligand>
</feature>
<feature type="binding site" evidence="1">
    <location>
        <position position="495"/>
    </location>
    <ligand>
        <name>ATP</name>
        <dbReference type="ChEBI" id="CHEBI:30616"/>
    </ligand>
</feature>
<feature type="binding site" evidence="1">
    <location>
        <position position="532"/>
    </location>
    <ligand>
        <name>ATP</name>
        <dbReference type="ChEBI" id="CHEBI:30616"/>
    </ligand>
</feature>
<feature type="binding site" evidence="1">
    <location>
        <position position="533"/>
    </location>
    <ligand>
        <name>Mg(2+)</name>
        <dbReference type="ChEBI" id="CHEBI:18420"/>
        <label>1</label>
    </ligand>
</feature>
<feature type="binding site" evidence="1">
    <location>
        <position position="535"/>
    </location>
    <ligand>
        <name>substrate</name>
    </ligand>
</feature>
<reference key="1">
    <citation type="journal article" date="2009" name="J. Bacteriol.">
        <title>Genome sequences of three Agrobacterium biovars help elucidate the evolution of multichromosome genomes in bacteria.</title>
        <authorList>
            <person name="Slater S.C."/>
            <person name="Goldman B.S."/>
            <person name="Goodner B."/>
            <person name="Setubal J.C."/>
            <person name="Farrand S.K."/>
            <person name="Nester E.W."/>
            <person name="Burr T.J."/>
            <person name="Banta L."/>
            <person name="Dickerman A.W."/>
            <person name="Paulsen I."/>
            <person name="Otten L."/>
            <person name="Suen G."/>
            <person name="Welch R."/>
            <person name="Almeida N.F."/>
            <person name="Arnold F."/>
            <person name="Burton O.T."/>
            <person name="Du Z."/>
            <person name="Ewing A."/>
            <person name="Godsy E."/>
            <person name="Heisel S."/>
            <person name="Houmiel K.L."/>
            <person name="Jhaveri J."/>
            <person name="Lu J."/>
            <person name="Miller N.M."/>
            <person name="Norton S."/>
            <person name="Chen Q."/>
            <person name="Phoolcharoen W."/>
            <person name="Ohlin V."/>
            <person name="Ondrusek D."/>
            <person name="Pride N."/>
            <person name="Stricklin S.L."/>
            <person name="Sun J."/>
            <person name="Wheeler C."/>
            <person name="Wilson L."/>
            <person name="Zhu H."/>
            <person name="Wood D.W."/>
        </authorList>
    </citation>
    <scope>NUCLEOTIDE SEQUENCE [LARGE SCALE GENOMIC DNA]</scope>
    <source>
        <strain>ATCC BAA-846 / DSM 112012 / S4</strain>
    </source>
</reference>
<keyword id="KW-0067">ATP-binding</keyword>
<keyword id="KW-0963">Cytoplasm</keyword>
<keyword id="KW-0436">Ligase</keyword>
<keyword id="KW-0460">Magnesium</keyword>
<keyword id="KW-0479">Metal-binding</keyword>
<keyword id="KW-0547">Nucleotide-binding</keyword>
<keyword id="KW-0658">Purine biosynthesis</keyword>
<keyword id="KW-1185">Reference proteome</keyword>
<name>PURL_ALLAM</name>
<proteinExistence type="inferred from homology"/>
<sequence>MTIPNSIPITPELVASHGLKPEEYDRILQLIGREPTFTELGIFSAMWNEHCSYKSSKRWLRTLPTTGARVIQGPGENAGVVDIDDGDCVVFKMESHNHPSYIEPYQGAATGVGGILRDVFTMGARPIAAMNALRFGAPDHPKTRHLVSGVVAGVGGYGNAFGVPTVGGEVEFDERYNGNILVNAFAAGLAKSDAIFLSEAKGVGLPVVYLGAKTGRDGVGGATMASAEFDESIEEKRPTVQVGDPFTEKCLLEACLELMKTGAVIAIQDMGAAGLTCSAVEMGAKGDLGIELDLDTVPVREENMTAYEMMLSESQERMLMVLEPSKEEVAKAIFVKWGLDFAIVGKTTDDLRFRILHQGEEVANLPIKDLGDQAPEYDRPWRESDKRGPLPANLVDEPADYRAAILSLVGSANQSSRRWVYEQYDTLIQGNSLQLPGGDAGVVRVENHPTKALAFSSDVTPRYVEADPFEGGKQAVAECWRNITATGAEPLAATDNLNFGNPEKPEIMGQLVEAIKGIGEACRALDFPIVSGNVSLYNETNGVAILPTPTIAGVGLLPDWSRMAKIGGAQDGDHVLLIGTDGTHLGSSIYLRDLLGRTDGPAPEVDLHAERRNGDFIRSAIRNGQVTACHDISSGGLGIALAEMAMASAKGLTIDLSESRGPAHALLFGEDQARYVVTVPADLANFICANAEGAGVPFRRLGKVGGDALVIDGVCTIAVEELRNTHESWFPNFMDGKAETLAAAQ</sequence>
<evidence type="ECO:0000255" key="1">
    <source>
        <dbReference type="HAMAP-Rule" id="MF_00420"/>
    </source>
</evidence>
<gene>
    <name evidence="1" type="primary">purL</name>
    <name type="ordered locus">Avi_1941</name>
</gene>
<organism>
    <name type="scientific">Allorhizobium ampelinum (strain ATCC BAA-846 / DSM 112012 / S4)</name>
    <name type="common">Agrobacterium vitis (strain S4)</name>
    <dbReference type="NCBI Taxonomy" id="311402"/>
    <lineage>
        <taxon>Bacteria</taxon>
        <taxon>Pseudomonadati</taxon>
        <taxon>Pseudomonadota</taxon>
        <taxon>Alphaproteobacteria</taxon>
        <taxon>Hyphomicrobiales</taxon>
        <taxon>Rhizobiaceae</taxon>
        <taxon>Rhizobium/Agrobacterium group</taxon>
        <taxon>Allorhizobium</taxon>
        <taxon>Allorhizobium ampelinum</taxon>
    </lineage>
</organism>
<protein>
    <recommendedName>
        <fullName evidence="1">Phosphoribosylformylglycinamidine synthase subunit PurL</fullName>
        <shortName evidence="1">FGAM synthase</shortName>
        <ecNumber evidence="1">6.3.5.3</ecNumber>
    </recommendedName>
    <alternativeName>
        <fullName evidence="1">Formylglycinamide ribonucleotide amidotransferase subunit II</fullName>
        <shortName evidence="1">FGAR amidotransferase II</shortName>
        <shortName evidence="1">FGAR-AT II</shortName>
    </alternativeName>
    <alternativeName>
        <fullName evidence="1">Glutamine amidotransferase PurL</fullName>
    </alternativeName>
    <alternativeName>
        <fullName evidence="1">Phosphoribosylformylglycinamidine synthase subunit II</fullName>
    </alternativeName>
</protein>
<comment type="function">
    <text evidence="1">Part of the phosphoribosylformylglycinamidine synthase complex involved in the purines biosynthetic pathway. Catalyzes the ATP-dependent conversion of formylglycinamide ribonucleotide (FGAR) and glutamine to yield formylglycinamidine ribonucleotide (FGAM) and glutamate. The FGAM synthase complex is composed of three subunits. PurQ produces an ammonia molecule by converting glutamine to glutamate. PurL transfers the ammonia molecule to FGAR to form FGAM in an ATP-dependent manner. PurS interacts with PurQ and PurL and is thought to assist in the transfer of the ammonia molecule from PurQ to PurL.</text>
</comment>
<comment type="catalytic activity">
    <reaction evidence="1">
        <text>N(2)-formyl-N(1)-(5-phospho-beta-D-ribosyl)glycinamide + L-glutamine + ATP + H2O = 2-formamido-N(1)-(5-O-phospho-beta-D-ribosyl)acetamidine + L-glutamate + ADP + phosphate + H(+)</text>
        <dbReference type="Rhea" id="RHEA:17129"/>
        <dbReference type="ChEBI" id="CHEBI:15377"/>
        <dbReference type="ChEBI" id="CHEBI:15378"/>
        <dbReference type="ChEBI" id="CHEBI:29985"/>
        <dbReference type="ChEBI" id="CHEBI:30616"/>
        <dbReference type="ChEBI" id="CHEBI:43474"/>
        <dbReference type="ChEBI" id="CHEBI:58359"/>
        <dbReference type="ChEBI" id="CHEBI:147286"/>
        <dbReference type="ChEBI" id="CHEBI:147287"/>
        <dbReference type="ChEBI" id="CHEBI:456216"/>
        <dbReference type="EC" id="6.3.5.3"/>
    </reaction>
</comment>
<comment type="pathway">
    <text evidence="1">Purine metabolism; IMP biosynthesis via de novo pathway; 5-amino-1-(5-phospho-D-ribosyl)imidazole from N(2)-formyl-N(1)-(5-phospho-D-ribosyl)glycinamide: step 1/2.</text>
</comment>
<comment type="subunit">
    <text evidence="1">Monomer. Part of the FGAM synthase complex composed of 1 PurL, 1 PurQ and 2 PurS subunits.</text>
</comment>
<comment type="subcellular location">
    <subcellularLocation>
        <location evidence="1">Cytoplasm</location>
    </subcellularLocation>
</comment>
<comment type="similarity">
    <text evidence="1">Belongs to the FGAMS family.</text>
</comment>